<proteinExistence type="inferred from homology"/>
<comment type="function">
    <text evidence="1">Catalyzes the interconversion of methylthioribose-1-phosphate (MTR-1-P) into methylthioribulose-1-phosphate (MTRu-1-P).</text>
</comment>
<comment type="catalytic activity">
    <reaction evidence="1">
        <text>5-(methylsulfanyl)-alpha-D-ribose 1-phosphate = 5-(methylsulfanyl)-D-ribulose 1-phosphate</text>
        <dbReference type="Rhea" id="RHEA:19989"/>
        <dbReference type="ChEBI" id="CHEBI:58533"/>
        <dbReference type="ChEBI" id="CHEBI:58548"/>
        <dbReference type="EC" id="5.3.1.23"/>
    </reaction>
</comment>
<comment type="pathway">
    <text evidence="1">Amino-acid biosynthesis; L-methionine biosynthesis via salvage pathway; L-methionine from S-methyl-5-thio-alpha-D-ribose 1-phosphate: step 1/6.</text>
</comment>
<comment type="subunit">
    <text>Homodimer.</text>
</comment>
<comment type="similarity">
    <text evidence="2">Belongs to the eIF-2B alpha/beta/delta subunits family. MtnA subfamily.</text>
</comment>
<feature type="chain" id="PRO_0000357149" description="Methylthioribose-1-phosphate isomerase">
    <location>
        <begin position="1"/>
        <end position="353"/>
    </location>
</feature>
<feature type="active site" description="Proton donor" evidence="1">
    <location>
        <position position="240"/>
    </location>
</feature>
<feature type="binding site" evidence="1">
    <location>
        <begin position="51"/>
        <end position="53"/>
    </location>
    <ligand>
        <name>substrate</name>
    </ligand>
</feature>
<feature type="binding site" evidence="1">
    <location>
        <position position="94"/>
    </location>
    <ligand>
        <name>substrate</name>
    </ligand>
</feature>
<feature type="binding site" evidence="1">
    <location>
        <position position="199"/>
    </location>
    <ligand>
        <name>substrate</name>
    </ligand>
</feature>
<feature type="binding site" evidence="1">
    <location>
        <begin position="250"/>
        <end position="251"/>
    </location>
    <ligand>
        <name>substrate</name>
    </ligand>
</feature>
<feature type="site" description="Transition state stabilizer" evidence="1">
    <location>
        <position position="160"/>
    </location>
</feature>
<reference key="1">
    <citation type="journal article" date="2004" name="J. Mol. Microbiol. Biotechnol.">
        <title>The complete genome sequence of Bacillus licheniformis DSM13, an organism with great industrial potential.</title>
        <authorList>
            <person name="Veith B."/>
            <person name="Herzberg C."/>
            <person name="Steckel S."/>
            <person name="Feesche J."/>
            <person name="Maurer K.H."/>
            <person name="Ehrenreich P."/>
            <person name="Baeumer S."/>
            <person name="Henne A."/>
            <person name="Liesegang H."/>
            <person name="Merkl R."/>
            <person name="Ehrenreich A."/>
            <person name="Gottschalk G."/>
        </authorList>
    </citation>
    <scope>NUCLEOTIDE SEQUENCE [LARGE SCALE GENOMIC DNA]</scope>
    <source>
        <strain>ATCC 14580 / DSM 13 / JCM 2505 / CCUG 7422 / NBRC 12200 / NCIMB 9375 / NCTC 10341 / NRRL NRS-1264 / Gibson 46</strain>
    </source>
</reference>
<reference key="2">
    <citation type="journal article" date="2004" name="Genome Biol.">
        <title>Complete genome sequence of the industrial bacterium Bacillus licheniformis and comparisons with closely related Bacillus species.</title>
        <authorList>
            <person name="Rey M.W."/>
            <person name="Ramaiya P."/>
            <person name="Nelson B.A."/>
            <person name="Brody-Karpin S.D."/>
            <person name="Zaretsky E.J."/>
            <person name="Tang M."/>
            <person name="Lopez de Leon A."/>
            <person name="Xiang H."/>
            <person name="Gusti V."/>
            <person name="Clausen I.G."/>
            <person name="Olsen P.B."/>
            <person name="Rasmussen M.D."/>
            <person name="Andersen J.T."/>
            <person name="Joergensen P.L."/>
            <person name="Larsen T.S."/>
            <person name="Sorokin A."/>
            <person name="Bolotin A."/>
            <person name="Lapidus A."/>
            <person name="Galleron N."/>
            <person name="Ehrlich S.D."/>
            <person name="Berka R.M."/>
        </authorList>
    </citation>
    <scope>NUCLEOTIDE SEQUENCE [LARGE SCALE GENOMIC DNA]</scope>
    <source>
        <strain>ATCC 14580 / DSM 13 / JCM 2505 / CCUG 7422 / NBRC 12200 / NCIMB 9375 / NCTC 10341 / NRRL NRS-1264 / Gibson 46</strain>
    </source>
</reference>
<keyword id="KW-0028">Amino-acid biosynthesis</keyword>
<keyword id="KW-0413">Isomerase</keyword>
<keyword id="KW-0486">Methionine biosynthesis</keyword>
<keyword id="KW-1185">Reference proteome</keyword>
<name>MTNA_BACLD</name>
<organism>
    <name type="scientific">Bacillus licheniformis (strain ATCC 14580 / DSM 13 / JCM 2505 / CCUG 7422 / NBRC 12200 / NCIMB 9375 / NCTC 10341 / NRRL NRS-1264 / Gibson 46)</name>
    <dbReference type="NCBI Taxonomy" id="279010"/>
    <lineage>
        <taxon>Bacteria</taxon>
        <taxon>Bacillati</taxon>
        <taxon>Bacillota</taxon>
        <taxon>Bacilli</taxon>
        <taxon>Bacillales</taxon>
        <taxon>Bacillaceae</taxon>
        <taxon>Bacillus</taxon>
    </lineage>
</organism>
<protein>
    <recommendedName>
        <fullName evidence="1">Methylthioribose-1-phosphate isomerase</fullName>
        <shortName evidence="1">M1Pi</shortName>
        <shortName evidence="1">MTR-1-P isomerase</shortName>
        <ecNumber evidence="1">5.3.1.23</ecNumber>
    </recommendedName>
    <alternativeName>
        <fullName evidence="1">S-methyl-5-thioribose-1-phosphate isomerase</fullName>
    </alternativeName>
</protein>
<sequence length="353" mass="38700">MPEQFAVPRSVEWEETSVKILNQQKLPEKTEYLHLTTKEDIYDAIQTLKVRGAPAIGITAAFGLALCAQSIDTSDVSAFLRELRKIKDELNQARPTAVNLSWALNRLLKSAEGAKSVNEAKTNLVHEAIQIQVEDEETCRQIGQNALHLFKSGDSIMTICNAGSIATSRYGTALSPFYLAKTKDLDLHIYACETRPVLQGARLTAWELMQGGIDVTLITDSMAAHTMKEKNISAVIVGADRIARNGDTANKIGTFGLAILAKAFQIPFFIAAPLSTFDVSISCGDDIPIEERDPDEVRRINGTQIAPQEVPVFNPAFDITPHDLISGIITEKGIITDRFEEEIEALFSAEALT</sequence>
<dbReference type="EC" id="5.3.1.23" evidence="1"/>
<dbReference type="EMBL" id="CP000002">
    <property type="protein sequence ID" value="AAU23058.1"/>
    <property type="molecule type" value="Genomic_DNA"/>
</dbReference>
<dbReference type="EMBL" id="AE017333">
    <property type="protein sequence ID" value="AAU40412.1"/>
    <property type="molecule type" value="Genomic_DNA"/>
</dbReference>
<dbReference type="RefSeq" id="WP_009328612.1">
    <property type="nucleotide sequence ID" value="NC_006322.1"/>
</dbReference>
<dbReference type="SMR" id="Q65KK2"/>
<dbReference type="STRING" id="279010.BL03632"/>
<dbReference type="GeneID" id="92861899"/>
<dbReference type="KEGG" id="bld:BLi01511"/>
<dbReference type="KEGG" id="bli:BL03632"/>
<dbReference type="eggNOG" id="COG0182">
    <property type="taxonomic scope" value="Bacteria"/>
</dbReference>
<dbReference type="HOGENOM" id="CLU_016218_1_2_9"/>
<dbReference type="UniPathway" id="UPA00904">
    <property type="reaction ID" value="UER00874"/>
</dbReference>
<dbReference type="Proteomes" id="UP000000606">
    <property type="component" value="Chromosome"/>
</dbReference>
<dbReference type="GO" id="GO:0046523">
    <property type="term" value="F:S-methyl-5-thioribose-1-phosphate isomerase activity"/>
    <property type="evidence" value="ECO:0007669"/>
    <property type="project" value="UniProtKB-UniRule"/>
</dbReference>
<dbReference type="GO" id="GO:0019509">
    <property type="term" value="P:L-methionine salvage from methylthioadenosine"/>
    <property type="evidence" value="ECO:0007669"/>
    <property type="project" value="UniProtKB-UniRule"/>
</dbReference>
<dbReference type="FunFam" id="1.20.120.420:FF:000003">
    <property type="entry name" value="Methylthioribose-1-phosphate isomerase"/>
    <property type="match status" value="1"/>
</dbReference>
<dbReference type="FunFam" id="3.40.50.10470:FF:000006">
    <property type="entry name" value="Methylthioribose-1-phosphate isomerase"/>
    <property type="match status" value="1"/>
</dbReference>
<dbReference type="Gene3D" id="1.20.120.420">
    <property type="entry name" value="translation initiation factor eif-2b, domain 1"/>
    <property type="match status" value="1"/>
</dbReference>
<dbReference type="Gene3D" id="3.40.50.10470">
    <property type="entry name" value="Translation initiation factor eif-2b, domain 2"/>
    <property type="match status" value="1"/>
</dbReference>
<dbReference type="HAMAP" id="MF_01678">
    <property type="entry name" value="Salvage_MtnA"/>
    <property type="match status" value="1"/>
</dbReference>
<dbReference type="InterPro" id="IPR000649">
    <property type="entry name" value="IF-2B-related"/>
</dbReference>
<dbReference type="InterPro" id="IPR005251">
    <property type="entry name" value="IF-M1Pi"/>
</dbReference>
<dbReference type="InterPro" id="IPR042529">
    <property type="entry name" value="IF_2B-like_C"/>
</dbReference>
<dbReference type="InterPro" id="IPR011559">
    <property type="entry name" value="Initiation_fac_2B_a/b/d"/>
</dbReference>
<dbReference type="InterPro" id="IPR027363">
    <property type="entry name" value="M1Pi_N"/>
</dbReference>
<dbReference type="InterPro" id="IPR037171">
    <property type="entry name" value="NagB/RpiA_transferase-like"/>
</dbReference>
<dbReference type="NCBIfam" id="TIGR00524">
    <property type="entry name" value="eIF-2B_rel"/>
    <property type="match status" value="1"/>
</dbReference>
<dbReference type="NCBIfam" id="NF004326">
    <property type="entry name" value="PRK05720.1"/>
    <property type="match status" value="1"/>
</dbReference>
<dbReference type="NCBIfam" id="TIGR00512">
    <property type="entry name" value="salvage_mtnA"/>
    <property type="match status" value="1"/>
</dbReference>
<dbReference type="PANTHER" id="PTHR43475">
    <property type="entry name" value="METHYLTHIORIBOSE-1-PHOSPHATE ISOMERASE"/>
    <property type="match status" value="1"/>
</dbReference>
<dbReference type="PANTHER" id="PTHR43475:SF4">
    <property type="entry name" value="METHYLTHIORIBOSE-1-PHOSPHATE ISOMERASE"/>
    <property type="match status" value="1"/>
</dbReference>
<dbReference type="Pfam" id="PF01008">
    <property type="entry name" value="IF-2B"/>
    <property type="match status" value="1"/>
</dbReference>
<dbReference type="SUPFAM" id="SSF100950">
    <property type="entry name" value="NagB/RpiA/CoA transferase-like"/>
    <property type="match status" value="1"/>
</dbReference>
<gene>
    <name evidence="1" type="primary">mtnA</name>
    <name type="synonym">mtnS</name>
    <name type="synonym">ykrS</name>
    <name type="ordered locus">BLi01511</name>
    <name type="ordered locus">BL03632</name>
</gene>
<accession>Q65KK2</accession>
<accession>Q62W00</accession>
<evidence type="ECO:0000255" key="1">
    <source>
        <dbReference type="HAMAP-Rule" id="MF_01678"/>
    </source>
</evidence>
<evidence type="ECO:0000305" key="2"/>